<feature type="initiator methionine" description="Removed" evidence="1">
    <location>
        <position position="1"/>
    </location>
</feature>
<feature type="chain" id="PRO_0000171643" description="Flavodoxin">
    <location>
        <begin position="2"/>
        <end position="170"/>
    </location>
</feature>
<feature type="domain" description="Flavodoxin-like" evidence="2">
    <location>
        <begin position="4"/>
        <end position="165"/>
    </location>
</feature>
<comment type="function">
    <text>Low-potential electron donor to a number of redox enzymes.</text>
</comment>
<comment type="cofactor">
    <cofactor>
        <name>FMN</name>
        <dbReference type="ChEBI" id="CHEBI:58210"/>
    </cofactor>
</comment>
<comment type="induction">
    <text>By iron stress.</text>
</comment>
<comment type="similarity">
    <text evidence="3">Belongs to the flavodoxin family.</text>
</comment>
<proteinExistence type="evidence at transcript level"/>
<keyword id="KW-0249">Electron transport</keyword>
<keyword id="KW-0285">Flavoprotein</keyword>
<keyword id="KW-0288">FMN</keyword>
<keyword id="KW-1185">Reference proteome</keyword>
<keyword id="KW-0346">Stress response</keyword>
<keyword id="KW-0813">Transport</keyword>
<evidence type="ECO:0000250" key="1"/>
<evidence type="ECO:0000255" key="2">
    <source>
        <dbReference type="PROSITE-ProRule" id="PRU00088"/>
    </source>
</evidence>
<evidence type="ECO:0000305" key="3"/>
<accession>P31158</accession>
<accession>B1XL33</accession>
<gene>
    <name type="primary">isiB</name>
    <name type="ordered locus">SYNPCC7002_A1291</name>
</gene>
<dbReference type="EMBL" id="M88253">
    <property type="protein sequence ID" value="AAA27318.1"/>
    <property type="molecule type" value="Genomic_DNA"/>
</dbReference>
<dbReference type="EMBL" id="CP000951">
    <property type="protein sequence ID" value="ACA99288.1"/>
    <property type="molecule type" value="Genomic_DNA"/>
</dbReference>
<dbReference type="SMR" id="P31158"/>
<dbReference type="STRING" id="32049.SYNPCC7002_A1291"/>
<dbReference type="KEGG" id="syp:SYNPCC7002_A1291"/>
<dbReference type="eggNOG" id="COG0716">
    <property type="taxonomic scope" value="Bacteria"/>
</dbReference>
<dbReference type="HOGENOM" id="CLU_051402_1_0_3"/>
<dbReference type="Proteomes" id="UP000001688">
    <property type="component" value="Chromosome"/>
</dbReference>
<dbReference type="GO" id="GO:0009055">
    <property type="term" value="F:electron transfer activity"/>
    <property type="evidence" value="ECO:0007669"/>
    <property type="project" value="InterPro"/>
</dbReference>
<dbReference type="GO" id="GO:0010181">
    <property type="term" value="F:FMN binding"/>
    <property type="evidence" value="ECO:0007669"/>
    <property type="project" value="InterPro"/>
</dbReference>
<dbReference type="Gene3D" id="3.40.50.360">
    <property type="match status" value="1"/>
</dbReference>
<dbReference type="InterPro" id="IPR050619">
    <property type="entry name" value="Flavodoxin"/>
</dbReference>
<dbReference type="InterPro" id="IPR008254">
    <property type="entry name" value="Flavodoxin/NO_synth"/>
</dbReference>
<dbReference type="InterPro" id="IPR001226">
    <property type="entry name" value="Flavodoxin_CS"/>
</dbReference>
<dbReference type="InterPro" id="IPR010086">
    <property type="entry name" value="Flavodoxin_lc"/>
</dbReference>
<dbReference type="InterPro" id="IPR029039">
    <property type="entry name" value="Flavoprotein-like_sf"/>
</dbReference>
<dbReference type="NCBIfam" id="TIGR01752">
    <property type="entry name" value="flav_long"/>
    <property type="match status" value="1"/>
</dbReference>
<dbReference type="NCBIfam" id="NF006736">
    <property type="entry name" value="PRK09267.1-2"/>
    <property type="match status" value="1"/>
</dbReference>
<dbReference type="NCBIfam" id="NF006739">
    <property type="entry name" value="PRK09267.1-5"/>
    <property type="match status" value="1"/>
</dbReference>
<dbReference type="PANTHER" id="PTHR42809:SF1">
    <property type="entry name" value="FLAVODOXIN 1"/>
    <property type="match status" value="1"/>
</dbReference>
<dbReference type="PANTHER" id="PTHR42809">
    <property type="entry name" value="FLAVODOXIN 2"/>
    <property type="match status" value="1"/>
</dbReference>
<dbReference type="Pfam" id="PF00258">
    <property type="entry name" value="Flavodoxin_1"/>
    <property type="match status" value="1"/>
</dbReference>
<dbReference type="PIRSF" id="PIRSF038996">
    <property type="entry name" value="FldA"/>
    <property type="match status" value="1"/>
</dbReference>
<dbReference type="SUPFAM" id="SSF52218">
    <property type="entry name" value="Flavoproteins"/>
    <property type="match status" value="1"/>
</dbReference>
<dbReference type="PROSITE" id="PS00201">
    <property type="entry name" value="FLAVODOXIN"/>
    <property type="match status" value="1"/>
</dbReference>
<dbReference type="PROSITE" id="PS50902">
    <property type="entry name" value="FLAVODOXIN_LIKE"/>
    <property type="match status" value="1"/>
</dbReference>
<name>FLAV_PICP2</name>
<organism>
    <name type="scientific">Picosynechococcus sp. (strain ATCC 27264 / PCC 7002 / PR-6)</name>
    <name type="common">Agmenellum quadruplicatum</name>
    <dbReference type="NCBI Taxonomy" id="32049"/>
    <lineage>
        <taxon>Bacteria</taxon>
        <taxon>Bacillati</taxon>
        <taxon>Cyanobacteriota</taxon>
        <taxon>Cyanophyceae</taxon>
        <taxon>Oscillatoriophycideae</taxon>
        <taxon>Chroococcales</taxon>
        <taxon>Geminocystaceae</taxon>
        <taxon>Picosynechococcus</taxon>
    </lineage>
</organism>
<protein>
    <recommendedName>
        <fullName>Flavodoxin</fullName>
    </recommendedName>
</protein>
<reference key="1">
    <citation type="journal article" date="1992" name="J. Gen. Microbiol.">
        <title>An iron stress operon involved in photosynthetic electron transport in the marine cyanobacterium Synechococcus sp. PCC 7002.</title>
        <authorList>
            <person name="Leonhardt K.G."/>
            <person name="Straus N.A."/>
        </authorList>
    </citation>
    <scope>NUCLEOTIDE SEQUENCE [GENOMIC DNA]</scope>
</reference>
<reference key="2">
    <citation type="submission" date="2008-02" db="EMBL/GenBank/DDBJ databases">
        <title>Complete sequence of Synechococcus sp. PCC 7002.</title>
        <authorList>
            <person name="Li T."/>
            <person name="Zhao J."/>
            <person name="Zhao C."/>
            <person name="Liu Z."/>
            <person name="Zhao F."/>
            <person name="Marquardt J."/>
            <person name="Nomura C.T."/>
            <person name="Persson S."/>
            <person name="Detter J.C."/>
            <person name="Richardson P.M."/>
            <person name="Lanz C."/>
            <person name="Schuster S.C."/>
            <person name="Wang J."/>
            <person name="Li S."/>
            <person name="Huang X."/>
            <person name="Cai T."/>
            <person name="Yu Z."/>
            <person name="Luo J."/>
            <person name="Zhao J."/>
            <person name="Bryant D.A."/>
        </authorList>
    </citation>
    <scope>NUCLEOTIDE SEQUENCE [LARGE SCALE GENOMIC DNA]</scope>
    <source>
        <strain>ATCC 27264 / PCC 7002 / PR-6</strain>
    </source>
</reference>
<sequence length="170" mass="18479">MSKIGLFFGTQTGNTEELAQAIQAAFGGSDIVELFDVAEVDIEALRDFDQLIIGCPTWNVGELQSDWEALYDDLDDVDFSGKTIAYFGAGDQVGYADNFQDAMGVLEEKITSLGGKTVGQWPTAGYDHSESKAERDGKFVGLAIDEDNQPELTAERIQAWVAQLKPAFGL</sequence>